<keyword id="KW-0120">Carbon dioxide fixation</keyword>
<keyword id="KW-0456">Lyase</keyword>
<keyword id="KW-0460">Magnesium</keyword>
<feature type="chain" id="PRO_0000166612" description="Phosphoenolpyruvate carboxylase">
    <location>
        <begin position="1"/>
        <end position="989"/>
    </location>
</feature>
<feature type="active site" evidence="1">
    <location>
        <position position="175"/>
    </location>
</feature>
<feature type="active site" evidence="1">
    <location>
        <position position="630"/>
    </location>
</feature>
<evidence type="ECO:0000255" key="1">
    <source>
        <dbReference type="HAMAP-Rule" id="MF_00595"/>
    </source>
</evidence>
<sequence>MESMKQFKNNNVDLISNNDPLDKNRALIEDLWESVLREECPDDQANRLIQLKELSYSNKVEEYSPKNFKTEIVDIVNSMDLAESISAARAFSLYFQLVNILEQRVEEDRYIQSFTNQNVKKSHDNLDPFAPALARQNAPVTFKELFFRLRRLNVPPGKLEELLQEMDIRLVFTAHPTEIVRHTIRHKQTRVANLLQKIQVEKFLTIEDIKSLKIQLKEEIRLWWRTDELHQFKPSVIDEVDYALHYFQQVLFDAMPQLRGRISSALTENYPDVQMPTESFCTFGSWVGSDRDGNPSVTPEITWRTACYQRQLMLERYIKATSNLRDQLSVSMQWSQVSSSLLESLETDRVKFPEIYEARATRYRSEPYRLKLSYILEKLRLTHERNNLLSEGGWKLSLERESDNKNLELVEKLHYKSVDEFTYDLELIKNSLNSTDLTCEAVNKLLTQVHIFGFSLASLDIRQESTRHSDAIQELTNYLELPKQYDQMSEKDRIQWLNEELNTKRPLIPSEVNWNKSTEETFSVFKMVKRLQEEFGSRICHSYVISMSHSASDLLEVLLLAKEMGLIDQGSQKSTLLVVPLFETVEDLQRAPDVMEQLFQLDFYKSLLPKVGESFKPLQELMLGYSDSNKDSGFLSSNWEIHRAQIALQNLSSRNNILLRLFHGRGGSVGRGGGPAYQAILAQPSGTLKGRIKITEQGEVLASKYSLPELALYNLETVTTAVIQNSLVNNRLDATPEWNDLMTRLAETSRIQYRKLVHENPNLLTFFQEVTPIEEISKLQISSRPARRKKGAKDLSSLRAIPWVFGWTQSRFLLPSWFGVGTALSVELKSDPEQIELLRVLHQRWPFFRMLISKVEMTLSKVDLEVAKYYVDTLGSKENSKSFEEIFDVISKEYNLTKSLVLEITGKNKLLESDRDLRSSVNLRNKTIIPLGFLQVSLLRRLRDQTRQPPISEFIEDRIESKRAYSRSELLRGALLTINGIAAGMRNTG</sequence>
<name>CAPP_PROMP</name>
<organism>
    <name type="scientific">Prochlorococcus marinus subsp. pastoris (strain CCMP1986 / NIES-2087 / MED4)</name>
    <dbReference type="NCBI Taxonomy" id="59919"/>
    <lineage>
        <taxon>Bacteria</taxon>
        <taxon>Bacillati</taxon>
        <taxon>Cyanobacteriota</taxon>
        <taxon>Cyanophyceae</taxon>
        <taxon>Synechococcales</taxon>
        <taxon>Prochlorococcaceae</taxon>
        <taxon>Prochlorococcus</taxon>
    </lineage>
</organism>
<dbReference type="EC" id="4.1.1.31" evidence="1"/>
<dbReference type="EMBL" id="BX548174">
    <property type="protein sequence ID" value="CAE20034.1"/>
    <property type="molecule type" value="Genomic_DNA"/>
</dbReference>
<dbReference type="RefSeq" id="WP_011133203.1">
    <property type="nucleotide sequence ID" value="NC_005072.1"/>
</dbReference>
<dbReference type="SMR" id="Q7UZT0"/>
<dbReference type="STRING" id="59919.PMM1575"/>
<dbReference type="KEGG" id="pmm:PMM1575"/>
<dbReference type="eggNOG" id="COG2352">
    <property type="taxonomic scope" value="Bacteria"/>
</dbReference>
<dbReference type="HOGENOM" id="CLU_006557_2_0_3"/>
<dbReference type="OrthoDB" id="9768133at2"/>
<dbReference type="Proteomes" id="UP000001026">
    <property type="component" value="Chromosome"/>
</dbReference>
<dbReference type="GO" id="GO:0005829">
    <property type="term" value="C:cytosol"/>
    <property type="evidence" value="ECO:0007669"/>
    <property type="project" value="TreeGrafter"/>
</dbReference>
<dbReference type="GO" id="GO:0000287">
    <property type="term" value="F:magnesium ion binding"/>
    <property type="evidence" value="ECO:0007669"/>
    <property type="project" value="UniProtKB-UniRule"/>
</dbReference>
<dbReference type="GO" id="GO:0008964">
    <property type="term" value="F:phosphoenolpyruvate carboxylase activity"/>
    <property type="evidence" value="ECO:0007669"/>
    <property type="project" value="UniProtKB-UniRule"/>
</dbReference>
<dbReference type="GO" id="GO:0015977">
    <property type="term" value="P:carbon fixation"/>
    <property type="evidence" value="ECO:0007669"/>
    <property type="project" value="UniProtKB-UniRule"/>
</dbReference>
<dbReference type="GO" id="GO:0006107">
    <property type="term" value="P:oxaloacetate metabolic process"/>
    <property type="evidence" value="ECO:0007669"/>
    <property type="project" value="UniProtKB-UniRule"/>
</dbReference>
<dbReference type="GO" id="GO:0006099">
    <property type="term" value="P:tricarboxylic acid cycle"/>
    <property type="evidence" value="ECO:0007669"/>
    <property type="project" value="InterPro"/>
</dbReference>
<dbReference type="Gene3D" id="1.20.1440.90">
    <property type="entry name" value="Phosphoenolpyruvate/pyruvate domain"/>
    <property type="match status" value="1"/>
</dbReference>
<dbReference type="HAMAP" id="MF_00595">
    <property type="entry name" value="PEPcase_type1"/>
    <property type="match status" value="1"/>
</dbReference>
<dbReference type="InterPro" id="IPR021135">
    <property type="entry name" value="PEP_COase"/>
</dbReference>
<dbReference type="InterPro" id="IPR022805">
    <property type="entry name" value="PEP_COase_bac/pln-type"/>
</dbReference>
<dbReference type="InterPro" id="IPR018129">
    <property type="entry name" value="PEP_COase_Lys_AS"/>
</dbReference>
<dbReference type="InterPro" id="IPR033129">
    <property type="entry name" value="PEPCASE_His_AS"/>
</dbReference>
<dbReference type="InterPro" id="IPR015813">
    <property type="entry name" value="Pyrv/PenolPyrv_kinase-like_dom"/>
</dbReference>
<dbReference type="NCBIfam" id="NF000584">
    <property type="entry name" value="PRK00009.1"/>
    <property type="match status" value="1"/>
</dbReference>
<dbReference type="PANTHER" id="PTHR30523">
    <property type="entry name" value="PHOSPHOENOLPYRUVATE CARBOXYLASE"/>
    <property type="match status" value="1"/>
</dbReference>
<dbReference type="PANTHER" id="PTHR30523:SF6">
    <property type="entry name" value="PHOSPHOENOLPYRUVATE CARBOXYLASE"/>
    <property type="match status" value="1"/>
</dbReference>
<dbReference type="Pfam" id="PF00311">
    <property type="entry name" value="PEPcase"/>
    <property type="match status" value="1"/>
</dbReference>
<dbReference type="PRINTS" id="PR00150">
    <property type="entry name" value="PEPCARBXLASE"/>
</dbReference>
<dbReference type="SUPFAM" id="SSF51621">
    <property type="entry name" value="Phosphoenolpyruvate/pyruvate domain"/>
    <property type="match status" value="1"/>
</dbReference>
<dbReference type="PROSITE" id="PS00781">
    <property type="entry name" value="PEPCASE_1"/>
    <property type="match status" value="1"/>
</dbReference>
<dbReference type="PROSITE" id="PS00393">
    <property type="entry name" value="PEPCASE_2"/>
    <property type="match status" value="1"/>
</dbReference>
<comment type="function">
    <text evidence="1">Forms oxaloacetate, a four-carbon dicarboxylic acid source for the tricarboxylic acid cycle.</text>
</comment>
<comment type="catalytic activity">
    <reaction evidence="1">
        <text>oxaloacetate + phosphate = phosphoenolpyruvate + hydrogencarbonate</text>
        <dbReference type="Rhea" id="RHEA:28370"/>
        <dbReference type="ChEBI" id="CHEBI:16452"/>
        <dbReference type="ChEBI" id="CHEBI:17544"/>
        <dbReference type="ChEBI" id="CHEBI:43474"/>
        <dbReference type="ChEBI" id="CHEBI:58702"/>
        <dbReference type="EC" id="4.1.1.31"/>
    </reaction>
</comment>
<comment type="cofactor">
    <cofactor evidence="1">
        <name>Mg(2+)</name>
        <dbReference type="ChEBI" id="CHEBI:18420"/>
    </cofactor>
</comment>
<comment type="similarity">
    <text evidence="1">Belongs to the PEPCase type 1 family.</text>
</comment>
<gene>
    <name evidence="1" type="primary">ppc</name>
    <name type="ordered locus">PMM1575</name>
</gene>
<reference key="1">
    <citation type="journal article" date="2003" name="Nature">
        <title>Genome divergence in two Prochlorococcus ecotypes reflects oceanic niche differentiation.</title>
        <authorList>
            <person name="Rocap G."/>
            <person name="Larimer F.W."/>
            <person name="Lamerdin J.E."/>
            <person name="Malfatti S."/>
            <person name="Chain P."/>
            <person name="Ahlgren N.A."/>
            <person name="Arellano A."/>
            <person name="Coleman M."/>
            <person name="Hauser L."/>
            <person name="Hess W.R."/>
            <person name="Johnson Z.I."/>
            <person name="Land M.L."/>
            <person name="Lindell D."/>
            <person name="Post A.F."/>
            <person name="Regala W."/>
            <person name="Shah M."/>
            <person name="Shaw S.L."/>
            <person name="Steglich C."/>
            <person name="Sullivan M.B."/>
            <person name="Ting C.S."/>
            <person name="Tolonen A."/>
            <person name="Webb E.A."/>
            <person name="Zinser E.R."/>
            <person name="Chisholm S.W."/>
        </authorList>
    </citation>
    <scope>NUCLEOTIDE SEQUENCE [LARGE SCALE GENOMIC DNA]</scope>
    <source>
        <strain>CCMP1986 / NIES-2087 / MED4</strain>
    </source>
</reference>
<accession>Q7UZT0</accession>
<protein>
    <recommendedName>
        <fullName evidence="1">Phosphoenolpyruvate carboxylase</fullName>
        <shortName evidence="1">PEPC</shortName>
        <shortName evidence="1">PEPCase</shortName>
        <ecNumber evidence="1">4.1.1.31</ecNumber>
    </recommendedName>
</protein>
<proteinExistence type="inferred from homology"/>